<sequence>MLVLGIESSCDETGVAVYDSESGLLSHALHSQIATHRVHGGVVPELASRDHVNYLVPLVDEVLTKAQIRKNQLDGIAYTAGPGLIGALLVGSCFAKSLAYALNIPALAIHHLEAHLLAAKMETPSLDFPFIALLVSGGHCQLIEVNNIGEYRLLGDTLDDAVGEAFDKTAKLMGIPYPGGAVLANLADQCLSTPYQFPRPMTDRPGLDFSFSGLKTHALNTWNQSEKKESDRSEIAKAFQQAVVETLIIKCKRAIKESQSKRLVVAGGVGANKALRSALQKWIKDIKGEVYFPALEYCTDNGAMVAYAGCLRMMRGESDGGWGVMVKPRWPLA</sequence>
<evidence type="ECO:0000255" key="1">
    <source>
        <dbReference type="HAMAP-Rule" id="MF_01445"/>
    </source>
</evidence>
<accession>Q5X2T1</accession>
<gene>
    <name evidence="1" type="primary">tsaD</name>
    <name type="synonym">gcp</name>
    <name type="ordered locus">lpp2306</name>
</gene>
<proteinExistence type="inferred from homology"/>
<name>TSAD_LEGPA</name>
<feature type="chain" id="PRO_0000303404" description="tRNA N6-adenosine threonylcarbamoyltransferase">
    <location>
        <begin position="1"/>
        <end position="333"/>
    </location>
</feature>
<feature type="binding site" evidence="1">
    <location>
        <position position="111"/>
    </location>
    <ligand>
        <name>Fe cation</name>
        <dbReference type="ChEBI" id="CHEBI:24875"/>
    </ligand>
</feature>
<feature type="binding site" evidence="1">
    <location>
        <position position="115"/>
    </location>
    <ligand>
        <name>Fe cation</name>
        <dbReference type="ChEBI" id="CHEBI:24875"/>
    </ligand>
</feature>
<feature type="binding site" evidence="1">
    <location>
        <begin position="134"/>
        <end position="138"/>
    </location>
    <ligand>
        <name>substrate</name>
    </ligand>
</feature>
<feature type="binding site" evidence="1">
    <location>
        <position position="167"/>
    </location>
    <ligand>
        <name>substrate</name>
    </ligand>
</feature>
<feature type="binding site" evidence="1">
    <location>
        <position position="180"/>
    </location>
    <ligand>
        <name>substrate</name>
    </ligand>
</feature>
<feature type="binding site" evidence="1">
    <location>
        <position position="272"/>
    </location>
    <ligand>
        <name>substrate</name>
    </ligand>
</feature>
<feature type="binding site" evidence="1">
    <location>
        <position position="300"/>
    </location>
    <ligand>
        <name>Fe cation</name>
        <dbReference type="ChEBI" id="CHEBI:24875"/>
    </ligand>
</feature>
<keyword id="KW-0012">Acyltransferase</keyword>
<keyword id="KW-0963">Cytoplasm</keyword>
<keyword id="KW-0408">Iron</keyword>
<keyword id="KW-0479">Metal-binding</keyword>
<keyword id="KW-0808">Transferase</keyword>
<keyword id="KW-0819">tRNA processing</keyword>
<reference key="1">
    <citation type="journal article" date="2004" name="Nat. Genet.">
        <title>Evidence in the Legionella pneumophila genome for exploitation of host cell functions and high genome plasticity.</title>
        <authorList>
            <person name="Cazalet C."/>
            <person name="Rusniok C."/>
            <person name="Brueggemann H."/>
            <person name="Zidane N."/>
            <person name="Magnier A."/>
            <person name="Ma L."/>
            <person name="Tichit M."/>
            <person name="Jarraud S."/>
            <person name="Bouchier C."/>
            <person name="Vandenesch F."/>
            <person name="Kunst F."/>
            <person name="Etienne J."/>
            <person name="Glaser P."/>
            <person name="Buchrieser C."/>
        </authorList>
    </citation>
    <scope>NUCLEOTIDE SEQUENCE [LARGE SCALE GENOMIC DNA]</scope>
    <source>
        <strain>Paris</strain>
    </source>
</reference>
<dbReference type="EC" id="2.3.1.234" evidence="1"/>
<dbReference type="EMBL" id="CR628336">
    <property type="protein sequence ID" value="CAH13459.1"/>
    <property type="molecule type" value="Genomic_DNA"/>
</dbReference>
<dbReference type="RefSeq" id="WP_015961445.1">
    <property type="nucleotide sequence ID" value="NC_006368.1"/>
</dbReference>
<dbReference type="SMR" id="Q5X2T1"/>
<dbReference type="KEGG" id="lpp:lpp2306"/>
<dbReference type="LegioList" id="lpp2306"/>
<dbReference type="HOGENOM" id="CLU_023208_0_0_6"/>
<dbReference type="GO" id="GO:0005737">
    <property type="term" value="C:cytoplasm"/>
    <property type="evidence" value="ECO:0007669"/>
    <property type="project" value="UniProtKB-SubCell"/>
</dbReference>
<dbReference type="GO" id="GO:0005506">
    <property type="term" value="F:iron ion binding"/>
    <property type="evidence" value="ECO:0007669"/>
    <property type="project" value="UniProtKB-UniRule"/>
</dbReference>
<dbReference type="GO" id="GO:0061711">
    <property type="term" value="F:N(6)-L-threonylcarbamoyladenine synthase activity"/>
    <property type="evidence" value="ECO:0007669"/>
    <property type="project" value="UniProtKB-EC"/>
</dbReference>
<dbReference type="GO" id="GO:0002949">
    <property type="term" value="P:tRNA threonylcarbamoyladenosine modification"/>
    <property type="evidence" value="ECO:0007669"/>
    <property type="project" value="UniProtKB-UniRule"/>
</dbReference>
<dbReference type="CDD" id="cd24133">
    <property type="entry name" value="ASKHA_NBD_TsaD_bac"/>
    <property type="match status" value="1"/>
</dbReference>
<dbReference type="FunFam" id="3.30.420.40:FF:000012">
    <property type="entry name" value="tRNA N6-adenosine threonylcarbamoyltransferase"/>
    <property type="match status" value="1"/>
</dbReference>
<dbReference type="FunFam" id="3.30.420.40:FF:000040">
    <property type="entry name" value="tRNA N6-adenosine threonylcarbamoyltransferase"/>
    <property type="match status" value="1"/>
</dbReference>
<dbReference type="Gene3D" id="3.30.420.40">
    <property type="match status" value="2"/>
</dbReference>
<dbReference type="HAMAP" id="MF_01445">
    <property type="entry name" value="TsaD"/>
    <property type="match status" value="1"/>
</dbReference>
<dbReference type="InterPro" id="IPR043129">
    <property type="entry name" value="ATPase_NBD"/>
</dbReference>
<dbReference type="InterPro" id="IPR000905">
    <property type="entry name" value="Gcp-like_dom"/>
</dbReference>
<dbReference type="InterPro" id="IPR017861">
    <property type="entry name" value="KAE1/TsaD"/>
</dbReference>
<dbReference type="InterPro" id="IPR017860">
    <property type="entry name" value="Peptidase_M22_CS"/>
</dbReference>
<dbReference type="InterPro" id="IPR022450">
    <property type="entry name" value="TsaD"/>
</dbReference>
<dbReference type="NCBIfam" id="TIGR00329">
    <property type="entry name" value="gcp_kae1"/>
    <property type="match status" value="1"/>
</dbReference>
<dbReference type="NCBIfam" id="TIGR03723">
    <property type="entry name" value="T6A_TsaD_YgjD"/>
    <property type="match status" value="1"/>
</dbReference>
<dbReference type="PANTHER" id="PTHR11735">
    <property type="entry name" value="TRNA N6-ADENOSINE THREONYLCARBAMOYLTRANSFERASE"/>
    <property type="match status" value="1"/>
</dbReference>
<dbReference type="PANTHER" id="PTHR11735:SF6">
    <property type="entry name" value="TRNA N6-ADENOSINE THREONYLCARBAMOYLTRANSFERASE, MITOCHONDRIAL"/>
    <property type="match status" value="1"/>
</dbReference>
<dbReference type="Pfam" id="PF00814">
    <property type="entry name" value="TsaD"/>
    <property type="match status" value="1"/>
</dbReference>
<dbReference type="PRINTS" id="PR00789">
    <property type="entry name" value="OSIALOPTASE"/>
</dbReference>
<dbReference type="SUPFAM" id="SSF53067">
    <property type="entry name" value="Actin-like ATPase domain"/>
    <property type="match status" value="2"/>
</dbReference>
<dbReference type="PROSITE" id="PS01016">
    <property type="entry name" value="GLYCOPROTEASE"/>
    <property type="match status" value="1"/>
</dbReference>
<comment type="function">
    <text evidence="1">Required for the formation of a threonylcarbamoyl group on adenosine at position 37 (t(6)A37) in tRNAs that read codons beginning with adenine. Is involved in the transfer of the threonylcarbamoyl moiety of threonylcarbamoyl-AMP (TC-AMP) to the N6 group of A37, together with TsaE and TsaB. TsaD likely plays a direct catalytic role in this reaction.</text>
</comment>
<comment type="catalytic activity">
    <reaction evidence="1">
        <text>L-threonylcarbamoyladenylate + adenosine(37) in tRNA = N(6)-L-threonylcarbamoyladenosine(37) in tRNA + AMP + H(+)</text>
        <dbReference type="Rhea" id="RHEA:37059"/>
        <dbReference type="Rhea" id="RHEA-COMP:10162"/>
        <dbReference type="Rhea" id="RHEA-COMP:10163"/>
        <dbReference type="ChEBI" id="CHEBI:15378"/>
        <dbReference type="ChEBI" id="CHEBI:73682"/>
        <dbReference type="ChEBI" id="CHEBI:74411"/>
        <dbReference type="ChEBI" id="CHEBI:74418"/>
        <dbReference type="ChEBI" id="CHEBI:456215"/>
        <dbReference type="EC" id="2.3.1.234"/>
    </reaction>
</comment>
<comment type="cofactor">
    <cofactor evidence="1">
        <name>Fe(2+)</name>
        <dbReference type="ChEBI" id="CHEBI:29033"/>
    </cofactor>
    <text evidence="1">Binds 1 Fe(2+) ion per subunit.</text>
</comment>
<comment type="subcellular location">
    <subcellularLocation>
        <location evidence="1">Cytoplasm</location>
    </subcellularLocation>
</comment>
<comment type="similarity">
    <text evidence="1">Belongs to the KAE1 / TsaD family.</text>
</comment>
<organism>
    <name type="scientific">Legionella pneumophila (strain Paris)</name>
    <dbReference type="NCBI Taxonomy" id="297246"/>
    <lineage>
        <taxon>Bacteria</taxon>
        <taxon>Pseudomonadati</taxon>
        <taxon>Pseudomonadota</taxon>
        <taxon>Gammaproteobacteria</taxon>
        <taxon>Legionellales</taxon>
        <taxon>Legionellaceae</taxon>
        <taxon>Legionella</taxon>
    </lineage>
</organism>
<protein>
    <recommendedName>
        <fullName evidence="1">tRNA N6-adenosine threonylcarbamoyltransferase</fullName>
        <ecNumber evidence="1">2.3.1.234</ecNumber>
    </recommendedName>
    <alternativeName>
        <fullName evidence="1">N6-L-threonylcarbamoyladenine synthase</fullName>
        <shortName evidence="1">t(6)A synthase</shortName>
    </alternativeName>
    <alternativeName>
        <fullName evidence="1">t(6)A37 threonylcarbamoyladenosine biosynthesis protein TsaD</fullName>
    </alternativeName>
    <alternativeName>
        <fullName evidence="1">tRNA threonylcarbamoyladenosine biosynthesis protein TsaD</fullName>
    </alternativeName>
</protein>